<name>ESIP1_MOUSE</name>
<gene>
    <name type="primary">Epsti1</name>
</gene>
<proteinExistence type="evidence at protein level"/>
<accession>Q8VDI1</accession>
<accession>Q80WK5</accession>
<accession>Q8VDW6</accession>
<sequence length="314" mass="36098">MYTRSKVVGPGLGTSSISRDHAGAGQRRELGLQQNRRQSLEVAAPEGPKMERQGHADQGSAGTYTLIAPNESRRQKIQRIAEQELADLERWKQQNRAKPVYLVPQRLGGSQSEAEVRQKQQLQQMRSKYQQKLKRDESIRIRKEAEEAKFQKMKAIQREKSNKLEEKKQLQEDIRRATFREHHQSKTAELLSRLDTERRNRSACLIAPPATQSSRWKLPVLLRDPSWAGSQAHRDSPQKEDNPRLQKTRDGHQKNKLLETKGQHQEEERAQIHQAEHWRVNNAFLDRLQGKSQPGGLEQSGGCCNMNSTDSWGL</sequence>
<dbReference type="EMBL" id="AY239223">
    <property type="protein sequence ID" value="AAP23934.1"/>
    <property type="molecule type" value="mRNA"/>
</dbReference>
<dbReference type="EMBL" id="AY239224">
    <property type="protein sequence ID" value="AAP23935.1"/>
    <property type="molecule type" value="mRNA"/>
</dbReference>
<dbReference type="EMBL" id="AK077223">
    <property type="protein sequence ID" value="BAC36694.1"/>
    <property type="molecule type" value="mRNA"/>
</dbReference>
<dbReference type="EMBL" id="AK077376">
    <property type="protein sequence ID" value="BAC36775.1"/>
    <property type="molecule type" value="mRNA"/>
</dbReference>
<dbReference type="EMBL" id="AK135710">
    <property type="protein sequence ID" value="BAE22621.1"/>
    <property type="molecule type" value="mRNA"/>
</dbReference>
<dbReference type="EMBL" id="AK136055">
    <property type="protein sequence ID" value="BAE22799.1"/>
    <property type="molecule type" value="mRNA"/>
</dbReference>
<dbReference type="EMBL" id="AC125130">
    <property type="status" value="NOT_ANNOTATED_CDS"/>
    <property type="molecule type" value="Genomic_DNA"/>
</dbReference>
<dbReference type="EMBL" id="AC136019">
    <property type="status" value="NOT_ANNOTATED_CDS"/>
    <property type="molecule type" value="Genomic_DNA"/>
</dbReference>
<dbReference type="EMBL" id="BC020120">
    <property type="protein sequence ID" value="AAH20120.1"/>
    <property type="molecule type" value="mRNA"/>
</dbReference>
<dbReference type="EMBL" id="BC021821">
    <property type="protein sequence ID" value="AAH21821.1"/>
    <property type="molecule type" value="mRNA"/>
</dbReference>
<dbReference type="CCDS" id="CCDS56971.1">
    <molecule id="Q8VDI1-1"/>
</dbReference>
<dbReference type="CCDS" id="CCDS88718.1">
    <molecule id="Q8VDI1-2"/>
</dbReference>
<dbReference type="RefSeq" id="NP_083771.1">
    <property type="nucleotide sequence ID" value="NM_029495.2"/>
</dbReference>
<dbReference type="RefSeq" id="NP_849147.1">
    <molecule id="Q8VDI1-2"/>
    <property type="nucleotide sequence ID" value="NM_178825.4"/>
</dbReference>
<dbReference type="SMR" id="Q8VDI1"/>
<dbReference type="BioGRID" id="224363">
    <property type="interactions" value="1"/>
</dbReference>
<dbReference type="FunCoup" id="Q8VDI1">
    <property type="interactions" value="10"/>
</dbReference>
<dbReference type="STRING" id="10090.ENSMUSP00000022591"/>
<dbReference type="GlyGen" id="Q8VDI1">
    <property type="glycosylation" value="1 site, 1 O-linked glycan (1 site)"/>
</dbReference>
<dbReference type="iPTMnet" id="Q8VDI1"/>
<dbReference type="PhosphoSitePlus" id="Q8VDI1"/>
<dbReference type="jPOST" id="Q8VDI1"/>
<dbReference type="PaxDb" id="10090-ENSMUSP00000022591"/>
<dbReference type="PeptideAtlas" id="Q8VDI1"/>
<dbReference type="ProteomicsDB" id="275540">
    <molecule id="Q8VDI1-1"/>
</dbReference>
<dbReference type="ProteomicsDB" id="275541">
    <molecule id="Q8VDI1-2"/>
</dbReference>
<dbReference type="Antibodypedia" id="3005">
    <property type="antibodies" value="210 antibodies from 26 providers"/>
</dbReference>
<dbReference type="DNASU" id="108670"/>
<dbReference type="Ensembl" id="ENSMUST00000227903.2">
    <molecule id="Q8VDI1-2"/>
    <property type="protein sequence ID" value="ENSMUSP00000154502.2"/>
    <property type="gene ID" value="ENSMUSG00000022014.17"/>
</dbReference>
<dbReference type="GeneID" id="108670"/>
<dbReference type="KEGG" id="mmu:108670"/>
<dbReference type="UCSC" id="uc007usd.2">
    <molecule id="Q8VDI1-2"/>
    <property type="organism name" value="mouse"/>
</dbReference>
<dbReference type="UCSC" id="uc007use.2">
    <molecule id="Q8VDI1-1"/>
    <property type="organism name" value="mouse"/>
</dbReference>
<dbReference type="AGR" id="MGI:1915168"/>
<dbReference type="CTD" id="94240"/>
<dbReference type="MGI" id="MGI:1915168">
    <property type="gene designation" value="Epsti1"/>
</dbReference>
<dbReference type="VEuPathDB" id="HostDB:ENSMUSG00000022014"/>
<dbReference type="eggNOG" id="ENOG502RZCM">
    <property type="taxonomic scope" value="Eukaryota"/>
</dbReference>
<dbReference type="GeneTree" id="ENSGT00390000013820"/>
<dbReference type="InParanoid" id="Q8VDI1"/>
<dbReference type="OrthoDB" id="10053624at2759"/>
<dbReference type="TreeFam" id="TF335788"/>
<dbReference type="Reactome" id="R-MMU-9696273">
    <property type="pathway name" value="RND1 GTPase cycle"/>
</dbReference>
<dbReference type="BioGRID-ORCS" id="108670">
    <property type="hits" value="3 hits in 77 CRISPR screens"/>
</dbReference>
<dbReference type="ChiTaRS" id="Epsti1">
    <property type="organism name" value="mouse"/>
</dbReference>
<dbReference type="PRO" id="PR:Q8VDI1"/>
<dbReference type="Proteomes" id="UP000000589">
    <property type="component" value="Chromosome 14"/>
</dbReference>
<dbReference type="RNAct" id="Q8VDI1">
    <property type="molecule type" value="protein"/>
</dbReference>
<dbReference type="Bgee" id="ENSMUSG00000022014">
    <property type="expression patterns" value="Expressed in peripheral lymph node and 101 other cell types or tissues"/>
</dbReference>
<dbReference type="ExpressionAtlas" id="Q8VDI1">
    <property type="expression patterns" value="baseline and differential"/>
</dbReference>
<dbReference type="GO" id="GO:0071222">
    <property type="term" value="P:cellular response to lipopolysaccharide"/>
    <property type="evidence" value="ECO:0000314"/>
    <property type="project" value="MGI"/>
</dbReference>
<dbReference type="GO" id="GO:0071346">
    <property type="term" value="P:cellular response to type II interferon"/>
    <property type="evidence" value="ECO:0000314"/>
    <property type="project" value="MGI"/>
</dbReference>
<dbReference type="GO" id="GO:0010467">
    <property type="term" value="P:gene expression"/>
    <property type="evidence" value="ECO:0000315"/>
    <property type="project" value="MGI"/>
</dbReference>
<dbReference type="GO" id="GO:0048873">
    <property type="term" value="P:homeostasis of number of cells within a tissue"/>
    <property type="evidence" value="ECO:0000315"/>
    <property type="project" value="MGI"/>
</dbReference>
<dbReference type="GO" id="GO:0006954">
    <property type="term" value="P:inflammatory response"/>
    <property type="evidence" value="ECO:0000315"/>
    <property type="project" value="MGI"/>
</dbReference>
<dbReference type="GO" id="GO:0042116">
    <property type="term" value="P:macrophage activation"/>
    <property type="evidence" value="ECO:0000315"/>
    <property type="project" value="MGI"/>
</dbReference>
<dbReference type="GO" id="GO:0030225">
    <property type="term" value="P:macrophage differentiation"/>
    <property type="evidence" value="ECO:0000315"/>
    <property type="project" value="MGI"/>
</dbReference>
<dbReference type="GO" id="GO:0008104">
    <property type="term" value="P:protein localization"/>
    <property type="evidence" value="ECO:0000315"/>
    <property type="project" value="MGI"/>
</dbReference>
<dbReference type="InterPro" id="IPR026185">
    <property type="entry name" value="EPSTI1"/>
</dbReference>
<dbReference type="PANTHER" id="PTHR22529">
    <property type="entry name" value="EPITHELIAL-STROMAL INTERACTION PROTEIN 1"/>
    <property type="match status" value="1"/>
</dbReference>
<dbReference type="PANTHER" id="PTHR22529:SF1">
    <property type="entry name" value="EPITHELIAL-STROMAL INTERACTION PROTEIN 1"/>
    <property type="match status" value="1"/>
</dbReference>
<keyword id="KW-0025">Alternative splicing</keyword>
<keyword id="KW-0175">Coiled coil</keyword>
<keyword id="KW-0597">Phosphoprotein</keyword>
<keyword id="KW-1185">Reference proteome</keyword>
<feature type="chain" id="PRO_0000314035" description="Epithelial-stromal interaction protein 1">
    <location>
        <begin position="1"/>
        <end position="314"/>
    </location>
</feature>
<feature type="region of interest" description="Disordered" evidence="2">
    <location>
        <begin position="1"/>
        <end position="72"/>
    </location>
</feature>
<feature type="region of interest" description="Disordered" evidence="2">
    <location>
        <begin position="227"/>
        <end position="272"/>
    </location>
</feature>
<feature type="region of interest" description="Disordered" evidence="2">
    <location>
        <begin position="289"/>
        <end position="314"/>
    </location>
</feature>
<feature type="coiled-coil region" evidence="1">
    <location>
        <begin position="71"/>
        <end position="180"/>
    </location>
</feature>
<feature type="compositionally biased region" description="Basic and acidic residues" evidence="2">
    <location>
        <begin position="18"/>
        <end position="30"/>
    </location>
</feature>
<feature type="compositionally biased region" description="Basic and acidic residues" evidence="2">
    <location>
        <begin position="232"/>
        <end position="272"/>
    </location>
</feature>
<feature type="compositionally biased region" description="Polar residues" evidence="2">
    <location>
        <begin position="305"/>
        <end position="314"/>
    </location>
</feature>
<feature type="modified residue" description="Phosphoserine" evidence="6 7">
    <location>
        <position position="39"/>
    </location>
</feature>
<feature type="splice variant" id="VSP_030203" description="In isoform 2." evidence="4">
    <original>KLPVLLRDPSWAG</original>
    <variation>VSGNSRRLLSATF</variation>
    <location>
        <begin position="217"/>
        <end position="229"/>
    </location>
</feature>
<feature type="splice variant" id="VSP_030204" description="In isoform 2." evidence="4">
    <location>
        <begin position="230"/>
        <end position="314"/>
    </location>
</feature>
<feature type="sequence conflict" description="In Ref. 4; AAH20120." evidence="5" ref="4">
    <original>T</original>
    <variation>K</variation>
    <location>
        <position position="178"/>
    </location>
</feature>
<feature type="sequence conflict" description="In Ref. 4; AAH20120." evidence="5" ref="4">
    <original>L</original>
    <variation>F</variation>
    <location>
        <position position="190"/>
    </location>
</feature>
<feature type="sequence conflict" description="In Ref. 4; AAH20120." evidence="5" ref="4">
    <original>L</original>
    <variation>P</variation>
    <location>
        <position position="205"/>
    </location>
</feature>
<feature type="sequence conflict" description="In Ref. 4; AAH20120." evidence="5" ref="4">
    <original>R</original>
    <variation>K</variation>
    <location>
        <position position="223"/>
    </location>
</feature>
<feature type="sequence conflict" description="In Ref. 4; AAH20120." evidence="5" ref="4">
    <original>E</original>
    <variation>K</variation>
    <location>
        <position position="298"/>
    </location>
</feature>
<feature type="sequence conflict" description="In Ref. 1; AAP23935, 2; BAC36694/BAC36775/BAE22621/BAE22799 and 4; AAH20120/AAH21821." evidence="5" ref="1 2 4">
    <original>L</original>
    <variation>I</variation>
    <location>
        <position position="314"/>
    </location>
</feature>
<comment type="function">
    <text evidence="3">Plays a role in M1 macrophage polarization and is required for the proper regulation of gene expression during M1 versus M2 macrophage differentiation (PubMed:29217193). Might play a role in RELA/p65 and STAT1 phosphorylation and nuclear localization upon activation of macrophages (PubMed:29217193).</text>
</comment>
<comment type="alternative products">
    <event type="alternative splicing"/>
    <isoform>
        <id>Q8VDI1-1</id>
        <name>1</name>
        <name>Epsti1a</name>
        <sequence type="displayed"/>
    </isoform>
    <isoform>
        <id>Q8VDI1-2</id>
        <name>2</name>
        <name>Epsti1b</name>
        <sequence type="described" ref="VSP_030203 VSP_030204"/>
    </isoform>
</comment>
<comment type="tissue specificity">
    <text evidence="3">Expressed in the spleen, with expression in T cells, B cells, natural killer cells and natural killer T cells and high expression in monocytes and macrophages.</text>
</comment>
<comment type="induction">
    <text evidence="3">Up-regulated in macrophages upon induction by lipopolysaccharides (LPS) and IFNG.</text>
</comment>
<comment type="disruption phenotype">
    <text evidence="3">Down-regulation of M1 macrophage marker genes, including Il12a, Il12b, Cxcl9, Cxcl10, Cxcl11, Hif1a and Il23a, and up-regulation of M2 marker genes, including Arg1, Ym1, Msr1 and Ccl17, in M1 macrophages. In bone marrow derived macrophages, impaired induction of M1 macrophage marker gene expression and impaired phosphorylation and nuclear localization of Rela/p65 and Stat1 after LPS and IFNG stimulation and enhanced M2 macrophage marker gene expression after Il4 stimulation. Reduced number of MHC class II- and F4/80-expressing cells within the population of M1 marker-expressing macrophages.</text>
</comment>
<reference key="1">
    <citation type="submission" date="2003-02" db="EMBL/GenBank/DDBJ databases">
        <title>A novel program of gene expression driven by Notch, is associated with commitment in neural stem cell lines.</title>
        <authorList>
            <person name="Uwanogho D.A."/>
            <person name="Mellodew K."/>
            <person name="Molloy G."/>
            <person name="Galloway D."/>
            <person name="Starling B.B."/>
            <person name="Crossland N."/>
            <person name="Price J."/>
        </authorList>
    </citation>
    <scope>NUCLEOTIDE SEQUENCE [MRNA] (ISOFORMS 1 AND 2)</scope>
    <source>
        <strain>C57BL/6J</strain>
    </source>
</reference>
<reference key="2">
    <citation type="journal article" date="2005" name="Science">
        <title>The transcriptional landscape of the mammalian genome.</title>
        <authorList>
            <person name="Carninci P."/>
            <person name="Kasukawa T."/>
            <person name="Katayama S."/>
            <person name="Gough J."/>
            <person name="Frith M.C."/>
            <person name="Maeda N."/>
            <person name="Oyama R."/>
            <person name="Ravasi T."/>
            <person name="Lenhard B."/>
            <person name="Wells C."/>
            <person name="Kodzius R."/>
            <person name="Shimokawa K."/>
            <person name="Bajic V.B."/>
            <person name="Brenner S.E."/>
            <person name="Batalov S."/>
            <person name="Forrest A.R."/>
            <person name="Zavolan M."/>
            <person name="Davis M.J."/>
            <person name="Wilming L.G."/>
            <person name="Aidinis V."/>
            <person name="Allen J.E."/>
            <person name="Ambesi-Impiombato A."/>
            <person name="Apweiler R."/>
            <person name="Aturaliya R.N."/>
            <person name="Bailey T.L."/>
            <person name="Bansal M."/>
            <person name="Baxter L."/>
            <person name="Beisel K.W."/>
            <person name="Bersano T."/>
            <person name="Bono H."/>
            <person name="Chalk A.M."/>
            <person name="Chiu K.P."/>
            <person name="Choudhary V."/>
            <person name="Christoffels A."/>
            <person name="Clutterbuck D.R."/>
            <person name="Crowe M.L."/>
            <person name="Dalla E."/>
            <person name="Dalrymple B.P."/>
            <person name="de Bono B."/>
            <person name="Della Gatta G."/>
            <person name="di Bernardo D."/>
            <person name="Down T."/>
            <person name="Engstrom P."/>
            <person name="Fagiolini M."/>
            <person name="Faulkner G."/>
            <person name="Fletcher C.F."/>
            <person name="Fukushima T."/>
            <person name="Furuno M."/>
            <person name="Futaki S."/>
            <person name="Gariboldi M."/>
            <person name="Georgii-Hemming P."/>
            <person name="Gingeras T.R."/>
            <person name="Gojobori T."/>
            <person name="Green R.E."/>
            <person name="Gustincich S."/>
            <person name="Harbers M."/>
            <person name="Hayashi Y."/>
            <person name="Hensch T.K."/>
            <person name="Hirokawa N."/>
            <person name="Hill D."/>
            <person name="Huminiecki L."/>
            <person name="Iacono M."/>
            <person name="Ikeo K."/>
            <person name="Iwama A."/>
            <person name="Ishikawa T."/>
            <person name="Jakt M."/>
            <person name="Kanapin A."/>
            <person name="Katoh M."/>
            <person name="Kawasawa Y."/>
            <person name="Kelso J."/>
            <person name="Kitamura H."/>
            <person name="Kitano H."/>
            <person name="Kollias G."/>
            <person name="Krishnan S.P."/>
            <person name="Kruger A."/>
            <person name="Kummerfeld S.K."/>
            <person name="Kurochkin I.V."/>
            <person name="Lareau L.F."/>
            <person name="Lazarevic D."/>
            <person name="Lipovich L."/>
            <person name="Liu J."/>
            <person name="Liuni S."/>
            <person name="McWilliam S."/>
            <person name="Madan Babu M."/>
            <person name="Madera M."/>
            <person name="Marchionni L."/>
            <person name="Matsuda H."/>
            <person name="Matsuzawa S."/>
            <person name="Miki H."/>
            <person name="Mignone F."/>
            <person name="Miyake S."/>
            <person name="Morris K."/>
            <person name="Mottagui-Tabar S."/>
            <person name="Mulder N."/>
            <person name="Nakano N."/>
            <person name="Nakauchi H."/>
            <person name="Ng P."/>
            <person name="Nilsson R."/>
            <person name="Nishiguchi S."/>
            <person name="Nishikawa S."/>
            <person name="Nori F."/>
            <person name="Ohara O."/>
            <person name="Okazaki Y."/>
            <person name="Orlando V."/>
            <person name="Pang K.C."/>
            <person name="Pavan W.J."/>
            <person name="Pavesi G."/>
            <person name="Pesole G."/>
            <person name="Petrovsky N."/>
            <person name="Piazza S."/>
            <person name="Reed J."/>
            <person name="Reid J.F."/>
            <person name="Ring B.Z."/>
            <person name="Ringwald M."/>
            <person name="Rost B."/>
            <person name="Ruan Y."/>
            <person name="Salzberg S.L."/>
            <person name="Sandelin A."/>
            <person name="Schneider C."/>
            <person name="Schoenbach C."/>
            <person name="Sekiguchi K."/>
            <person name="Semple C.A."/>
            <person name="Seno S."/>
            <person name="Sessa L."/>
            <person name="Sheng Y."/>
            <person name="Shibata Y."/>
            <person name="Shimada H."/>
            <person name="Shimada K."/>
            <person name="Silva D."/>
            <person name="Sinclair B."/>
            <person name="Sperling S."/>
            <person name="Stupka E."/>
            <person name="Sugiura K."/>
            <person name="Sultana R."/>
            <person name="Takenaka Y."/>
            <person name="Taki K."/>
            <person name="Tammoja K."/>
            <person name="Tan S.L."/>
            <person name="Tang S."/>
            <person name="Taylor M.S."/>
            <person name="Tegner J."/>
            <person name="Teichmann S.A."/>
            <person name="Ueda H.R."/>
            <person name="van Nimwegen E."/>
            <person name="Verardo R."/>
            <person name="Wei C.L."/>
            <person name="Yagi K."/>
            <person name="Yamanishi H."/>
            <person name="Zabarovsky E."/>
            <person name="Zhu S."/>
            <person name="Zimmer A."/>
            <person name="Hide W."/>
            <person name="Bult C."/>
            <person name="Grimmond S.M."/>
            <person name="Teasdale R.D."/>
            <person name="Liu E.T."/>
            <person name="Brusic V."/>
            <person name="Quackenbush J."/>
            <person name="Wahlestedt C."/>
            <person name="Mattick J.S."/>
            <person name="Hume D.A."/>
            <person name="Kai C."/>
            <person name="Sasaki D."/>
            <person name="Tomaru Y."/>
            <person name="Fukuda S."/>
            <person name="Kanamori-Katayama M."/>
            <person name="Suzuki M."/>
            <person name="Aoki J."/>
            <person name="Arakawa T."/>
            <person name="Iida J."/>
            <person name="Imamura K."/>
            <person name="Itoh M."/>
            <person name="Kato T."/>
            <person name="Kawaji H."/>
            <person name="Kawagashira N."/>
            <person name="Kawashima T."/>
            <person name="Kojima M."/>
            <person name="Kondo S."/>
            <person name="Konno H."/>
            <person name="Nakano K."/>
            <person name="Ninomiya N."/>
            <person name="Nishio T."/>
            <person name="Okada M."/>
            <person name="Plessy C."/>
            <person name="Shibata K."/>
            <person name="Shiraki T."/>
            <person name="Suzuki S."/>
            <person name="Tagami M."/>
            <person name="Waki K."/>
            <person name="Watahiki A."/>
            <person name="Okamura-Oho Y."/>
            <person name="Suzuki H."/>
            <person name="Kawai J."/>
            <person name="Hayashizaki Y."/>
        </authorList>
    </citation>
    <scope>NUCLEOTIDE SEQUENCE [LARGE SCALE MRNA] (ISOFORM 1)</scope>
    <source>
        <strain>C57BL/6J</strain>
        <tissue>Egg</tissue>
        <tissue>Head</tissue>
        <tissue>Testis</tissue>
    </source>
</reference>
<reference key="3">
    <citation type="journal article" date="2009" name="PLoS Biol.">
        <title>Lineage-specific biology revealed by a finished genome assembly of the mouse.</title>
        <authorList>
            <person name="Church D.M."/>
            <person name="Goodstadt L."/>
            <person name="Hillier L.W."/>
            <person name="Zody M.C."/>
            <person name="Goldstein S."/>
            <person name="She X."/>
            <person name="Bult C.J."/>
            <person name="Agarwala R."/>
            <person name="Cherry J.L."/>
            <person name="DiCuccio M."/>
            <person name="Hlavina W."/>
            <person name="Kapustin Y."/>
            <person name="Meric P."/>
            <person name="Maglott D."/>
            <person name="Birtle Z."/>
            <person name="Marques A.C."/>
            <person name="Graves T."/>
            <person name="Zhou S."/>
            <person name="Teague B."/>
            <person name="Potamousis K."/>
            <person name="Churas C."/>
            <person name="Place M."/>
            <person name="Herschleb J."/>
            <person name="Runnheim R."/>
            <person name="Forrest D."/>
            <person name="Amos-Landgraf J."/>
            <person name="Schwartz D.C."/>
            <person name="Cheng Z."/>
            <person name="Lindblad-Toh K."/>
            <person name="Eichler E.E."/>
            <person name="Ponting C.P."/>
        </authorList>
    </citation>
    <scope>NUCLEOTIDE SEQUENCE [LARGE SCALE GENOMIC DNA]</scope>
    <source>
        <strain>C57BL/6J</strain>
    </source>
</reference>
<reference key="4">
    <citation type="journal article" date="2004" name="Genome Res.">
        <title>The status, quality, and expansion of the NIH full-length cDNA project: the Mammalian Gene Collection (MGC).</title>
        <authorList>
            <consortium name="The MGC Project Team"/>
        </authorList>
    </citation>
    <scope>NUCLEOTIDE SEQUENCE [LARGE SCALE MRNA] (ISOFORM 1)</scope>
    <source>
        <strain>Czech II</strain>
        <strain>FVB/N</strain>
        <tissue>Mammary tumor</tissue>
    </source>
</reference>
<reference key="5">
    <citation type="journal article" date="2009" name="Immunity">
        <title>The phagosomal proteome in interferon-gamma-activated macrophages.</title>
        <authorList>
            <person name="Trost M."/>
            <person name="English L."/>
            <person name="Lemieux S."/>
            <person name="Courcelles M."/>
            <person name="Desjardins M."/>
            <person name="Thibault P."/>
        </authorList>
    </citation>
    <scope>PHOSPHORYLATION [LARGE SCALE ANALYSIS] AT SER-39</scope>
    <scope>IDENTIFICATION BY MASS SPECTROMETRY [LARGE SCALE ANALYSIS]</scope>
</reference>
<reference key="6">
    <citation type="journal article" date="2010" name="Cell">
        <title>A tissue-specific atlas of mouse protein phosphorylation and expression.</title>
        <authorList>
            <person name="Huttlin E.L."/>
            <person name="Jedrychowski M.P."/>
            <person name="Elias J.E."/>
            <person name="Goswami T."/>
            <person name="Rad R."/>
            <person name="Beausoleil S.A."/>
            <person name="Villen J."/>
            <person name="Haas W."/>
            <person name="Sowa M.E."/>
            <person name="Gygi S.P."/>
        </authorList>
    </citation>
    <scope>PHOSPHORYLATION [LARGE SCALE ANALYSIS] AT SER-39</scope>
    <scope>IDENTIFICATION BY MASS SPECTROMETRY [LARGE SCALE ANALYSIS]</scope>
    <source>
        <tissue>Lung</tissue>
        <tissue>Spleen</tissue>
    </source>
</reference>
<reference key="7">
    <citation type="journal article" date="2018" name="Biochem. Biophys. Res. Commun.">
        <title>Regulation of inflammatory gene expression in macrophages by epithelial-stromal interaction 1 (Epsti1).</title>
        <authorList>
            <person name="Kim Y.H."/>
            <person name="Lee J.R."/>
            <person name="Hahn M.J."/>
        </authorList>
    </citation>
    <scope>FUNCTION</scope>
    <scope>TISSUE SPECIFICITY</scope>
    <scope>INDUCTION BY LPS AND IFNG</scope>
    <scope>DISRUPTION PHENOTYPE</scope>
</reference>
<evidence type="ECO:0000255" key="1"/>
<evidence type="ECO:0000256" key="2">
    <source>
        <dbReference type="SAM" id="MobiDB-lite"/>
    </source>
</evidence>
<evidence type="ECO:0000269" key="3">
    <source>
    </source>
</evidence>
<evidence type="ECO:0000303" key="4">
    <source ref="1"/>
</evidence>
<evidence type="ECO:0000305" key="5"/>
<evidence type="ECO:0007744" key="6">
    <source>
    </source>
</evidence>
<evidence type="ECO:0007744" key="7">
    <source>
    </source>
</evidence>
<protein>
    <recommendedName>
        <fullName>Epithelial-stromal interaction protein 1</fullName>
    </recommendedName>
</protein>
<organism>
    <name type="scientific">Mus musculus</name>
    <name type="common">Mouse</name>
    <dbReference type="NCBI Taxonomy" id="10090"/>
    <lineage>
        <taxon>Eukaryota</taxon>
        <taxon>Metazoa</taxon>
        <taxon>Chordata</taxon>
        <taxon>Craniata</taxon>
        <taxon>Vertebrata</taxon>
        <taxon>Euteleostomi</taxon>
        <taxon>Mammalia</taxon>
        <taxon>Eutheria</taxon>
        <taxon>Euarchontoglires</taxon>
        <taxon>Glires</taxon>
        <taxon>Rodentia</taxon>
        <taxon>Myomorpha</taxon>
        <taxon>Muroidea</taxon>
        <taxon>Muridae</taxon>
        <taxon>Murinae</taxon>
        <taxon>Mus</taxon>
        <taxon>Mus</taxon>
    </lineage>
</organism>